<protein>
    <recommendedName>
        <fullName>Major prion protein</fullName>
        <shortName>PrP</shortName>
    </recommendedName>
    <alternativeName>
        <fullName>PrP27-30</fullName>
    </alternativeName>
    <alternativeName>
        <fullName>PrP33-35C</fullName>
    </alternativeName>
    <cdAntigenName>CD230</cdAntigenName>
</protein>
<organism>
    <name type="scientific">Pan troglodytes</name>
    <name type="common">Chimpanzee</name>
    <dbReference type="NCBI Taxonomy" id="9598"/>
    <lineage>
        <taxon>Eukaryota</taxon>
        <taxon>Metazoa</taxon>
        <taxon>Chordata</taxon>
        <taxon>Craniata</taxon>
        <taxon>Vertebrata</taxon>
        <taxon>Euteleostomi</taxon>
        <taxon>Mammalia</taxon>
        <taxon>Eutheria</taxon>
        <taxon>Euarchontoglires</taxon>
        <taxon>Primates</taxon>
        <taxon>Haplorrhini</taxon>
        <taxon>Catarrhini</taxon>
        <taxon>Hominidae</taxon>
        <taxon>Pan</taxon>
    </lineage>
</organism>
<comment type="function">
    <text evidence="2 4">Its primary physiological function is unclear. Has cytoprotective activity against internal or environmental stresses. May play a role in neuronal development and synaptic plasticity. May be required for neuronal myelin sheath maintenance. May play a role in iron uptake and iron homeostasis. Soluble oligomers are toxic to cultured neuroblastoma cells and induce apoptosis (in vitro). Association with GPC1 (via its heparan sulfate chains) targets PRNP to lipid rafts. Also provides Cu(2+) or Zn(2+) for the ascorbate-mediated GPC1 deaminase degradation of its heparan sulfate side chains (By similarity).</text>
</comment>
<comment type="subunit">
    <text evidence="2 4">Monomer and homodimer. Has a tendency to aggregate into amyloid fibrils containing a cross-beta spine, formed by a steric zipper of superposed beta-strands. Soluble oligomers may represent an intermediate stage on the path to fibril formation. Copper binding may promote oligomerization. Interacts with GRB2, APP, ERI3/PRNPIP and SYN1. Mislocalized cytosolically exposed PrP interacts with MGRN1; this interaction alters MGRN1 subcellular location and causes lysosomal enlargement. Interacts with KIAA1191.</text>
</comment>
<comment type="subcellular location">
    <subcellularLocation>
        <location evidence="2">Cell membrane</location>
        <topology evidence="2">Lipid-anchor</topology>
        <topology evidence="2">GPI-anchor</topology>
    </subcellularLocation>
    <subcellularLocation>
        <location evidence="4">Golgi apparatus</location>
    </subcellularLocation>
    <text evidence="2">Targeted to lipid rafts via association with the heparan sulfate chains of GPC1. Colocates, in the presence of Cu(2+), to vesicles in para- and perinuclear regions, where both proteins undergo internalization. Heparin displaces PRNP from lipid rafts and promotes endocytosis.</text>
</comment>
<comment type="domain">
    <text evidence="2">The normal, monomeric form has a mainly alpha-helical structure. The disease-associated, protease-resistant form forms amyloid fibrils containing a cross-beta spine, formed by a steric zipper of superposed beta-strands. Disease mutations may favor intermolecular contacts via short beta strands, and may thereby trigger oligomerization.</text>
</comment>
<comment type="domain">
    <text evidence="2">Contains an N-terminal region composed of octamer repeats. At low copper concentrations, the sidechains of His residues from three or four repeats contribute to the binding of a single copper ion. Alternatively, a copper ion can be bound by interaction with the sidechain and backbone amide nitrogen of a single His residue. The observed copper binding stoichiometry suggests that two repeat regions cooperate to stabilize the binding of a single copper ion. At higher copper concentrations, each octamer can bind one copper ion by interactions with the His sidechain and Gly backbone atoms. A mixture of binding types may occur, especially in the case of octamer repeat expansion. Copper binding may stabilize the conformation of this region and may promote oligomerization.</text>
</comment>
<comment type="disease">
    <text evidence="7">PrP is found in high quantity in the brain of humans and animals infected with the degenerative neurological diseases kuru, Creutzfeldt-Jakob disease (CJD), Gerstmann-Straussler syndrome (GSS), scrapie, bovine spongiform encephalopathy (BSE), transmissible mink encephalopathy (TME), etc.</text>
</comment>
<comment type="similarity">
    <text evidence="7">Belongs to the prion family.</text>
</comment>
<name>PRIO_PANTR</name>
<feature type="signal peptide" evidence="1">
    <location>
        <begin position="1"/>
        <end position="22"/>
    </location>
</feature>
<feature type="chain" id="PRO_0000025711" description="Major prion protein">
    <location>
        <begin position="23"/>
        <end position="230"/>
    </location>
</feature>
<feature type="propeptide" id="PRO_0000025712" description="Removed in mature form" evidence="1">
    <location>
        <begin position="231"/>
        <end position="253"/>
    </location>
</feature>
<feature type="repeat" description="1">
    <location>
        <begin position="51"/>
        <end position="59"/>
    </location>
</feature>
<feature type="repeat" description="2">
    <location>
        <begin position="60"/>
        <end position="67"/>
    </location>
</feature>
<feature type="repeat" description="3">
    <location>
        <begin position="68"/>
        <end position="75"/>
    </location>
</feature>
<feature type="repeat" description="4">
    <location>
        <begin position="76"/>
        <end position="83"/>
    </location>
</feature>
<feature type="repeat" description="5">
    <location>
        <begin position="84"/>
        <end position="91"/>
    </location>
</feature>
<feature type="region of interest" description="Interaction with GRB2, ERI3 and SYN1" evidence="4">
    <location>
        <begin position="23"/>
        <end position="230"/>
    </location>
</feature>
<feature type="region of interest" description="Disordered" evidence="6">
    <location>
        <begin position="26"/>
        <end position="108"/>
    </location>
</feature>
<feature type="region of interest" description="5 X 8 AA tandem repeats of P-H-G-G-G-W-G-Q">
    <location>
        <begin position="51"/>
        <end position="91"/>
    </location>
</feature>
<feature type="compositionally biased region" description="Gly residues" evidence="6">
    <location>
        <begin position="52"/>
        <end position="95"/>
    </location>
</feature>
<feature type="binding site" evidence="2">
    <location>
        <position position="61"/>
    </location>
    <ligand>
        <name>Cu(2+)</name>
        <dbReference type="ChEBI" id="CHEBI:29036"/>
        <label>1</label>
    </ligand>
</feature>
<feature type="binding site" evidence="2">
    <location>
        <position position="62"/>
    </location>
    <ligand>
        <name>Cu(2+)</name>
        <dbReference type="ChEBI" id="CHEBI:29036"/>
        <label>1</label>
    </ligand>
</feature>
<feature type="binding site" evidence="2">
    <location>
        <position position="63"/>
    </location>
    <ligand>
        <name>Cu(2+)</name>
        <dbReference type="ChEBI" id="CHEBI:29036"/>
        <label>1</label>
    </ligand>
</feature>
<feature type="binding site" evidence="2">
    <location>
        <position position="69"/>
    </location>
    <ligand>
        <name>Cu(2+)</name>
        <dbReference type="ChEBI" id="CHEBI:29036"/>
        <label>2</label>
    </ligand>
</feature>
<feature type="binding site" evidence="2">
    <location>
        <position position="70"/>
    </location>
    <ligand>
        <name>Cu(2+)</name>
        <dbReference type="ChEBI" id="CHEBI:29036"/>
        <label>2</label>
    </ligand>
</feature>
<feature type="binding site" evidence="2">
    <location>
        <position position="71"/>
    </location>
    <ligand>
        <name>Cu(2+)</name>
        <dbReference type="ChEBI" id="CHEBI:29036"/>
        <label>2</label>
    </ligand>
</feature>
<feature type="binding site" evidence="2">
    <location>
        <position position="77"/>
    </location>
    <ligand>
        <name>Cu(2+)</name>
        <dbReference type="ChEBI" id="CHEBI:29036"/>
        <label>3</label>
    </ligand>
</feature>
<feature type="binding site" evidence="2">
    <location>
        <position position="78"/>
    </location>
    <ligand>
        <name>Cu(2+)</name>
        <dbReference type="ChEBI" id="CHEBI:29036"/>
        <label>3</label>
    </ligand>
</feature>
<feature type="binding site" evidence="2">
    <location>
        <position position="79"/>
    </location>
    <ligand>
        <name>Cu(2+)</name>
        <dbReference type="ChEBI" id="CHEBI:29036"/>
        <label>3</label>
    </ligand>
</feature>
<feature type="binding site" evidence="2">
    <location>
        <position position="85"/>
    </location>
    <ligand>
        <name>Cu(2+)</name>
        <dbReference type="ChEBI" id="CHEBI:29036"/>
        <label>4</label>
    </ligand>
</feature>
<feature type="binding site" evidence="2">
    <location>
        <position position="86"/>
    </location>
    <ligand>
        <name>Cu(2+)</name>
        <dbReference type="ChEBI" id="CHEBI:29036"/>
        <label>4</label>
    </ligand>
</feature>
<feature type="binding site" evidence="2">
    <location>
        <position position="87"/>
    </location>
    <ligand>
        <name>Cu(2+)</name>
        <dbReference type="ChEBI" id="CHEBI:29036"/>
        <label>4</label>
    </ligand>
</feature>
<feature type="lipid moiety-binding region" description="GPI-anchor amidated serine" evidence="3">
    <location>
        <position position="230"/>
    </location>
</feature>
<feature type="glycosylation site" description="N-linked (GlcNAc...) asparagine" evidence="5">
    <location>
        <position position="181"/>
    </location>
</feature>
<feature type="glycosylation site" description="N-linked (GlcNAc...) asparagine" evidence="5">
    <location>
        <position position="197"/>
    </location>
</feature>
<feature type="disulfide bond" evidence="3">
    <location>
        <begin position="179"/>
        <end position="214"/>
    </location>
</feature>
<gene>
    <name type="primary">PRNP</name>
    <name type="synonym">PRP</name>
</gene>
<reference key="1">
    <citation type="journal article" date="1995" name="J. Mol. Biol.">
        <title>Prion protein gene variation among primates.</title>
        <authorList>
            <person name="Schaetzl H.M."/>
            <person name="Da Costa M."/>
            <person name="Taylor L."/>
            <person name="Cohen F.E."/>
            <person name="Prusiner S.B."/>
        </authorList>
    </citation>
    <scope>NUCLEOTIDE SEQUENCE [GENOMIC DNA]</scope>
</reference>
<reference key="2">
    <citation type="journal article" date="1994" name="Proc. Natl. Acad. Sci. U.S.A.">
        <title>Infectious amyloid precursor gene sequences in primates used for experimental transmission of human spongiform encephalopathy.</title>
        <authorList>
            <person name="Cervenakova L."/>
            <person name="Brown P."/>
            <person name="Goldfarb L.G."/>
            <person name="Nagle J."/>
            <person name="Pettrone K."/>
            <person name="Rubenstein R."/>
            <person name="Dubnick M."/>
            <person name="Gibbs C.J."/>
            <person name="Gajdusek D.C."/>
        </authorList>
    </citation>
    <scope>NUCLEOTIDE SEQUENCE [GENOMIC DNA]</scope>
    <source>
        <tissue>Brain</tissue>
    </source>
</reference>
<reference key="3">
    <citation type="journal article" date="2004" name="Cell">
        <title>Accelerated evolution of nervous system genes in the origin of Homo sapiens.</title>
        <authorList>
            <person name="Dorus S."/>
            <person name="Vallender E.J."/>
            <person name="Evans P.D."/>
            <person name="Anderson J.R."/>
            <person name="Gilbert S.L."/>
            <person name="Mahowald M."/>
            <person name="Wyckoff G.J."/>
            <person name="Malcom C.M."/>
            <person name="Lahn B.T."/>
        </authorList>
    </citation>
    <scope>NUCLEOTIDE SEQUENCE [MRNA]</scope>
</reference>
<sequence length="253" mass="27633">MANLGCWMLVLFVATWSDLGLCKKRPKPGGWNTGGSRYPGQGSPGGNRYPPQGGGGWGQPHGGGWGQPHGGGWGQPHGGGWGQPHGGGWGQGGGTHSQWNKPSKPKTNMKHMAGAAAAGAVVGGLGGYMLGSAMSRPIIHFGSDYEDRYYRENMHRYPNQVYYRPMDQYSSQNNFVHDCVNITIKQHTVTTTTKGENFTETDVKMMERVVEQMCITQYERESQAYYQRGSSMVLFSSPPVILLISFLIFLIVG</sequence>
<dbReference type="EMBL" id="U08296">
    <property type="protein sequence ID" value="AAC50085.1"/>
    <property type="molecule type" value="Genomic_DNA"/>
</dbReference>
<dbReference type="EMBL" id="U15039">
    <property type="protein sequence ID" value="AAA68632.1"/>
    <property type="molecule type" value="Genomic_DNA"/>
</dbReference>
<dbReference type="EMBL" id="AY665268">
    <property type="protein sequence ID" value="AAV74306.1"/>
    <property type="molecule type" value="mRNA"/>
</dbReference>
<dbReference type="PIR" id="I61847">
    <property type="entry name" value="I61847"/>
</dbReference>
<dbReference type="RefSeq" id="NP_001009093.1">
    <property type="nucleotide sequence ID" value="NM_001009093.6"/>
</dbReference>
<dbReference type="RefSeq" id="NP_001103676.1">
    <property type="nucleotide sequence ID" value="NM_001110206.5"/>
</dbReference>
<dbReference type="RefSeq" id="XP_009434905.1">
    <property type="nucleotide sequence ID" value="XM_009436630.5"/>
</dbReference>
<dbReference type="RefSeq" id="XP_009434906.1">
    <property type="nucleotide sequence ID" value="XM_009436631.5"/>
</dbReference>
<dbReference type="RefSeq" id="XP_063658476.1">
    <property type="nucleotide sequence ID" value="XM_063802406.1"/>
</dbReference>
<dbReference type="BMRB" id="P61768"/>
<dbReference type="SASBDB" id="P61768"/>
<dbReference type="SMR" id="P61768"/>
<dbReference type="FunCoup" id="P61768">
    <property type="interactions" value="501"/>
</dbReference>
<dbReference type="STRING" id="9598.ENSPTRP00000075233"/>
<dbReference type="GlyCosmos" id="P61768">
    <property type="glycosylation" value="2 sites, No reported glycans"/>
</dbReference>
<dbReference type="PaxDb" id="9598-ENSPTRP00000022659"/>
<dbReference type="Ensembl" id="ENSPTRT00000080287.1">
    <property type="protein sequence ID" value="ENSPTRP00000075233.1"/>
    <property type="gene ID" value="ENSPTRG00000046640.1"/>
</dbReference>
<dbReference type="GeneID" id="458076"/>
<dbReference type="KEGG" id="ptr:458076"/>
<dbReference type="CTD" id="5621"/>
<dbReference type="VGNC" id="VGNC:6248">
    <property type="gene designation" value="PRNP"/>
</dbReference>
<dbReference type="eggNOG" id="ENOG502S2A8">
    <property type="taxonomic scope" value="Eukaryota"/>
</dbReference>
<dbReference type="GeneTree" id="ENSGT00510000049083"/>
<dbReference type="HOGENOM" id="CLU_094631_0_0_1"/>
<dbReference type="InParanoid" id="P61768"/>
<dbReference type="OMA" id="QMCTTQY"/>
<dbReference type="OrthoDB" id="16850at9604"/>
<dbReference type="TreeFam" id="TF105188"/>
<dbReference type="Proteomes" id="UP000002277">
    <property type="component" value="Chromosome 20"/>
</dbReference>
<dbReference type="Bgee" id="ENSPTRG00000046640">
    <property type="expression patterns" value="Expressed in dorsolateral prefrontal cortex and 21 other cell types or tissues"/>
</dbReference>
<dbReference type="GO" id="GO:0009986">
    <property type="term" value="C:cell surface"/>
    <property type="evidence" value="ECO:0007669"/>
    <property type="project" value="Ensembl"/>
</dbReference>
<dbReference type="GO" id="GO:0005829">
    <property type="term" value="C:cytosol"/>
    <property type="evidence" value="ECO:0007669"/>
    <property type="project" value="Ensembl"/>
</dbReference>
<dbReference type="GO" id="GO:0030425">
    <property type="term" value="C:dendrite"/>
    <property type="evidence" value="ECO:0007669"/>
    <property type="project" value="Ensembl"/>
</dbReference>
<dbReference type="GO" id="GO:0005783">
    <property type="term" value="C:endoplasmic reticulum"/>
    <property type="evidence" value="ECO:0007669"/>
    <property type="project" value="Ensembl"/>
</dbReference>
<dbReference type="GO" id="GO:0005794">
    <property type="term" value="C:Golgi apparatus"/>
    <property type="evidence" value="ECO:0007669"/>
    <property type="project" value="UniProtKB-SubCell"/>
</dbReference>
<dbReference type="GO" id="GO:0016234">
    <property type="term" value="C:inclusion body"/>
    <property type="evidence" value="ECO:0007669"/>
    <property type="project" value="Ensembl"/>
</dbReference>
<dbReference type="GO" id="GO:0045121">
    <property type="term" value="C:membrane raft"/>
    <property type="evidence" value="ECO:0007669"/>
    <property type="project" value="Ensembl"/>
</dbReference>
<dbReference type="GO" id="GO:0031965">
    <property type="term" value="C:nuclear membrane"/>
    <property type="evidence" value="ECO:0007669"/>
    <property type="project" value="Ensembl"/>
</dbReference>
<dbReference type="GO" id="GO:0005886">
    <property type="term" value="C:plasma membrane"/>
    <property type="evidence" value="ECO:0007669"/>
    <property type="project" value="UniProtKB-SubCell"/>
</dbReference>
<dbReference type="GO" id="GO:0098552">
    <property type="term" value="C:side of membrane"/>
    <property type="evidence" value="ECO:0007669"/>
    <property type="project" value="UniProtKB-KW"/>
</dbReference>
<dbReference type="GO" id="GO:0043195">
    <property type="term" value="C:terminal bouton"/>
    <property type="evidence" value="ECO:0007669"/>
    <property type="project" value="Ensembl"/>
</dbReference>
<dbReference type="GO" id="GO:0001540">
    <property type="term" value="F:amyloid-beta binding"/>
    <property type="evidence" value="ECO:0007669"/>
    <property type="project" value="Ensembl"/>
</dbReference>
<dbReference type="GO" id="GO:0019828">
    <property type="term" value="F:aspartic-type endopeptidase inhibitor activity"/>
    <property type="evidence" value="ECO:0007669"/>
    <property type="project" value="Ensembl"/>
</dbReference>
<dbReference type="GO" id="GO:0005507">
    <property type="term" value="F:copper ion binding"/>
    <property type="evidence" value="ECO:0000250"/>
    <property type="project" value="UniProtKB"/>
</dbReference>
<dbReference type="GO" id="GO:1903135">
    <property type="term" value="F:cupric ion binding"/>
    <property type="evidence" value="ECO:0007669"/>
    <property type="project" value="Ensembl"/>
</dbReference>
<dbReference type="GO" id="GO:1903136">
    <property type="term" value="F:cuprous ion binding"/>
    <property type="evidence" value="ECO:0007669"/>
    <property type="project" value="Ensembl"/>
</dbReference>
<dbReference type="GO" id="GO:0005539">
    <property type="term" value="F:glycosaminoglycan binding"/>
    <property type="evidence" value="ECO:0007669"/>
    <property type="project" value="Ensembl"/>
</dbReference>
<dbReference type="GO" id="GO:0042802">
    <property type="term" value="F:identical protein binding"/>
    <property type="evidence" value="ECO:0007669"/>
    <property type="project" value="Ensembl"/>
</dbReference>
<dbReference type="GO" id="GO:0008017">
    <property type="term" value="F:microtubule binding"/>
    <property type="evidence" value="ECO:0007669"/>
    <property type="project" value="Ensembl"/>
</dbReference>
<dbReference type="GO" id="GO:0140693">
    <property type="term" value="F:molecular condensate scaffold activity"/>
    <property type="evidence" value="ECO:0007669"/>
    <property type="project" value="Ensembl"/>
</dbReference>
<dbReference type="GO" id="GO:0140677">
    <property type="term" value="F:molecular function activator activity"/>
    <property type="evidence" value="ECO:0007669"/>
    <property type="project" value="Ensembl"/>
</dbReference>
<dbReference type="GO" id="GO:0002020">
    <property type="term" value="F:protease binding"/>
    <property type="evidence" value="ECO:0007669"/>
    <property type="project" value="Ensembl"/>
</dbReference>
<dbReference type="GO" id="GO:0044877">
    <property type="term" value="F:protein-containing complex binding"/>
    <property type="evidence" value="ECO:0007669"/>
    <property type="project" value="Ensembl"/>
</dbReference>
<dbReference type="GO" id="GO:0038023">
    <property type="term" value="F:signaling receptor activity"/>
    <property type="evidence" value="ECO:0007669"/>
    <property type="project" value="Ensembl"/>
</dbReference>
<dbReference type="GO" id="GO:0031802">
    <property type="term" value="F:type 5 metabotropic glutamate receptor binding"/>
    <property type="evidence" value="ECO:0007669"/>
    <property type="project" value="Ensembl"/>
</dbReference>
<dbReference type="GO" id="GO:1904646">
    <property type="term" value="P:cellular response to amyloid-beta"/>
    <property type="evidence" value="ECO:0007669"/>
    <property type="project" value="Ensembl"/>
</dbReference>
<dbReference type="GO" id="GO:0071280">
    <property type="term" value="P:cellular response to copper ion"/>
    <property type="evidence" value="ECO:0007669"/>
    <property type="project" value="Ensembl"/>
</dbReference>
<dbReference type="GO" id="GO:0071466">
    <property type="term" value="P:cellular response to xenobiotic stimulus"/>
    <property type="evidence" value="ECO:0007669"/>
    <property type="project" value="Ensembl"/>
</dbReference>
<dbReference type="GO" id="GO:0035556">
    <property type="term" value="P:intracellular signal transduction"/>
    <property type="evidence" value="ECO:0007669"/>
    <property type="project" value="Ensembl"/>
</dbReference>
<dbReference type="GO" id="GO:0007611">
    <property type="term" value="P:learning or memory"/>
    <property type="evidence" value="ECO:0007669"/>
    <property type="project" value="Ensembl"/>
</dbReference>
<dbReference type="GO" id="GO:0046007">
    <property type="term" value="P:negative regulation of activated T cell proliferation"/>
    <property type="evidence" value="ECO:0007669"/>
    <property type="project" value="Ensembl"/>
</dbReference>
<dbReference type="GO" id="GO:1902430">
    <property type="term" value="P:negative regulation of amyloid-beta formation"/>
    <property type="evidence" value="ECO:0007669"/>
    <property type="project" value="Ensembl"/>
</dbReference>
<dbReference type="GO" id="GO:0043066">
    <property type="term" value="P:negative regulation of apoptotic process"/>
    <property type="evidence" value="ECO:0007669"/>
    <property type="project" value="Ensembl"/>
</dbReference>
<dbReference type="GO" id="GO:0070885">
    <property type="term" value="P:negative regulation of calcineurin-NFAT signaling cascade"/>
    <property type="evidence" value="ECO:0007669"/>
    <property type="project" value="Ensembl"/>
</dbReference>
<dbReference type="GO" id="GO:1902951">
    <property type="term" value="P:negative regulation of dendritic spine maintenance"/>
    <property type="evidence" value="ECO:0007669"/>
    <property type="project" value="Ensembl"/>
</dbReference>
<dbReference type="GO" id="GO:0032700">
    <property type="term" value="P:negative regulation of interleukin-17 production"/>
    <property type="evidence" value="ECO:0007669"/>
    <property type="project" value="Ensembl"/>
</dbReference>
<dbReference type="GO" id="GO:0032703">
    <property type="term" value="P:negative regulation of interleukin-2 production"/>
    <property type="evidence" value="ECO:0007669"/>
    <property type="project" value="Ensembl"/>
</dbReference>
<dbReference type="GO" id="GO:0050860">
    <property type="term" value="P:negative regulation of T cell receptor signaling pathway"/>
    <property type="evidence" value="ECO:0007669"/>
    <property type="project" value="Ensembl"/>
</dbReference>
<dbReference type="GO" id="GO:0000122">
    <property type="term" value="P:negative regulation of transcription by RNA polymerase II"/>
    <property type="evidence" value="ECO:0007669"/>
    <property type="project" value="Ensembl"/>
</dbReference>
<dbReference type="GO" id="GO:0032689">
    <property type="term" value="P:negative regulation of type II interferon production"/>
    <property type="evidence" value="ECO:0007669"/>
    <property type="project" value="Ensembl"/>
</dbReference>
<dbReference type="GO" id="GO:1990535">
    <property type="term" value="P:neuron projection maintenance"/>
    <property type="evidence" value="ECO:0007669"/>
    <property type="project" value="Ensembl"/>
</dbReference>
<dbReference type="GO" id="GO:0050850">
    <property type="term" value="P:positive regulation of calcium-mediated signaling"/>
    <property type="evidence" value="ECO:0007669"/>
    <property type="project" value="Ensembl"/>
</dbReference>
<dbReference type="GO" id="GO:1900451">
    <property type="term" value="P:positive regulation of glutamate receptor signaling pathway"/>
    <property type="evidence" value="ECO:0007669"/>
    <property type="project" value="Ensembl"/>
</dbReference>
<dbReference type="GO" id="GO:0043525">
    <property type="term" value="P:positive regulation of neuron apoptotic process"/>
    <property type="evidence" value="ECO:0007669"/>
    <property type="project" value="Ensembl"/>
</dbReference>
<dbReference type="GO" id="GO:1903078">
    <property type="term" value="P:positive regulation of protein localization to plasma membrane"/>
    <property type="evidence" value="ECO:0007669"/>
    <property type="project" value="Ensembl"/>
</dbReference>
<dbReference type="GO" id="GO:0090314">
    <property type="term" value="P:positive regulation of protein targeting to membrane"/>
    <property type="evidence" value="ECO:0007669"/>
    <property type="project" value="Ensembl"/>
</dbReference>
<dbReference type="GO" id="GO:0031648">
    <property type="term" value="P:protein destabilization"/>
    <property type="evidence" value="ECO:0007669"/>
    <property type="project" value="Ensembl"/>
</dbReference>
<dbReference type="GO" id="GO:0051260">
    <property type="term" value="P:protein homooligomerization"/>
    <property type="evidence" value="ECO:0007669"/>
    <property type="project" value="InterPro"/>
</dbReference>
<dbReference type="GO" id="GO:1905664">
    <property type="term" value="P:regulation of calcium ion import across plasma membrane"/>
    <property type="evidence" value="ECO:0007669"/>
    <property type="project" value="Ensembl"/>
</dbReference>
<dbReference type="GO" id="GO:1901379">
    <property type="term" value="P:regulation of potassium ion transmembrane transport"/>
    <property type="evidence" value="ECO:0007669"/>
    <property type="project" value="Ensembl"/>
</dbReference>
<dbReference type="GO" id="GO:0006979">
    <property type="term" value="P:response to oxidative stress"/>
    <property type="evidence" value="ECO:0007669"/>
    <property type="project" value="Ensembl"/>
</dbReference>
<dbReference type="FunFam" id="1.10.790.10:FF:000001">
    <property type="entry name" value="Major prion protein"/>
    <property type="match status" value="1"/>
</dbReference>
<dbReference type="Gene3D" id="1.10.790.10">
    <property type="entry name" value="Prion/Doppel protein, beta-ribbon domain"/>
    <property type="match status" value="1"/>
</dbReference>
<dbReference type="InterPro" id="IPR000817">
    <property type="entry name" value="Prion"/>
</dbReference>
<dbReference type="InterPro" id="IPR036924">
    <property type="entry name" value="Prion/Doppel_b-ribbon_dom_sf"/>
</dbReference>
<dbReference type="InterPro" id="IPR022416">
    <property type="entry name" value="Prion/Doppel_prot_b-ribbon_dom"/>
</dbReference>
<dbReference type="InterPro" id="IPR020949">
    <property type="entry name" value="Prion_copper_b_octapeptide"/>
</dbReference>
<dbReference type="InterPro" id="IPR025860">
    <property type="entry name" value="Prion_N"/>
</dbReference>
<dbReference type="PANTHER" id="PTHR15506">
    <property type="entry name" value="DOPPEL PRION"/>
    <property type="match status" value="1"/>
</dbReference>
<dbReference type="PANTHER" id="PTHR15506:SF2">
    <property type="entry name" value="MAJOR PRION PROTEIN"/>
    <property type="match status" value="1"/>
</dbReference>
<dbReference type="Pfam" id="PF00377">
    <property type="entry name" value="Prion"/>
    <property type="match status" value="1"/>
</dbReference>
<dbReference type="Pfam" id="PF11587">
    <property type="entry name" value="Prion_bPrPp"/>
    <property type="match status" value="1"/>
</dbReference>
<dbReference type="Pfam" id="PF03991">
    <property type="entry name" value="Prion_octapep"/>
    <property type="match status" value="1"/>
</dbReference>
<dbReference type="PRINTS" id="PR00341">
    <property type="entry name" value="PRION"/>
</dbReference>
<dbReference type="SMART" id="SM00157">
    <property type="entry name" value="PRP"/>
    <property type="match status" value="1"/>
</dbReference>
<dbReference type="SUPFAM" id="SSF54098">
    <property type="entry name" value="Prion-like"/>
    <property type="match status" value="1"/>
</dbReference>
<dbReference type="PROSITE" id="PS00291">
    <property type="entry name" value="PRION_1"/>
    <property type="match status" value="1"/>
</dbReference>
<dbReference type="PROSITE" id="PS00706">
    <property type="entry name" value="PRION_2"/>
    <property type="match status" value="1"/>
</dbReference>
<accession>P61768</accession>
<accession>P40253</accession>
<keyword id="KW-0034">Amyloid</keyword>
<keyword id="KW-1003">Cell membrane</keyword>
<keyword id="KW-0186">Copper</keyword>
<keyword id="KW-1015">Disulfide bond</keyword>
<keyword id="KW-0325">Glycoprotein</keyword>
<keyword id="KW-0333">Golgi apparatus</keyword>
<keyword id="KW-0336">GPI-anchor</keyword>
<keyword id="KW-0449">Lipoprotein</keyword>
<keyword id="KW-0472">Membrane</keyword>
<keyword id="KW-0479">Metal-binding</keyword>
<keyword id="KW-0640">Prion</keyword>
<keyword id="KW-1185">Reference proteome</keyword>
<keyword id="KW-0677">Repeat</keyword>
<keyword id="KW-0732">Signal</keyword>
<keyword id="KW-0862">Zinc</keyword>
<proteinExistence type="evidence at transcript level"/>
<evidence type="ECO:0000250" key="1"/>
<evidence type="ECO:0000250" key="2">
    <source>
        <dbReference type="UniProtKB" id="P04156"/>
    </source>
</evidence>
<evidence type="ECO:0000250" key="3">
    <source>
        <dbReference type="UniProtKB" id="P04273"/>
    </source>
</evidence>
<evidence type="ECO:0000250" key="4">
    <source>
        <dbReference type="UniProtKB" id="P04925"/>
    </source>
</evidence>
<evidence type="ECO:0000255" key="5"/>
<evidence type="ECO:0000256" key="6">
    <source>
        <dbReference type="SAM" id="MobiDB-lite"/>
    </source>
</evidence>
<evidence type="ECO:0000305" key="7"/>